<protein>
    <recommendedName>
        <fullName>Uncharacterized protein AZC_3085</fullName>
    </recommendedName>
</protein>
<reference key="1">
    <citation type="journal article" date="1991" name="Mol. Gen. Genet.">
        <title>Characterization of a novel Azorhizobium caulinodans ORS571 two-component regulatory system, NtrY/NtrX, involved in nitrogen fixation and metabolism.</title>
        <authorList>
            <person name="Pawlowski K."/>
            <person name="Klosse U."/>
            <person name="de Bruijn F.J."/>
        </authorList>
    </citation>
    <scope>NUCLEOTIDE SEQUENCE [GENOMIC DNA]</scope>
</reference>
<reference key="2">
    <citation type="submission" date="2007-04" db="EMBL/GenBank/DDBJ databases">
        <title>Complete genome sequence of the nitrogen-fixing bacterium Azorhizobium caulinodans ORS571.</title>
        <authorList>
            <person name="Lee K.B."/>
            <person name="Backer P.D."/>
            <person name="Aono T."/>
            <person name="Liu C.T."/>
            <person name="Suzuki S."/>
            <person name="Suzuki T."/>
            <person name="Kaneko T."/>
            <person name="Yamada M."/>
            <person name="Tabata S."/>
            <person name="Kupfer D.M."/>
            <person name="Najar F.Z."/>
            <person name="Wiley G.B."/>
            <person name="Roe B."/>
            <person name="Binnewies T."/>
            <person name="Ussery D."/>
            <person name="Vereecke D."/>
            <person name="Gevers D."/>
            <person name="Holsters M."/>
            <person name="Oyaizu H."/>
        </authorList>
    </citation>
    <scope>NUCLEOTIDE SEQUENCE [LARGE SCALE GENOMIC DNA]</scope>
    <source>
        <strain>ATCC 43989 / DSM 5975 / JCM 20966 / LMG 6465 / NBRC 14845 / NCIMB 13405 / ORS 571</strain>
    </source>
</reference>
<sequence length="735" mass="80476">MADEAEQAGLRILGDVLSAAHSAGDLSCLSPDLLARIADTFHLQRVSLFQVHEAEGRGIAATCVIDWRRPGLAFPAMTEGSHPPLTAAGGDPLLAQWAARRRRGETIIGRTRDLTGYLYGFFSHYGVVTFLTEPVMVHGRWWGHFCVDTPDAEHEWTAVERQAFKCIAAVLAGLLARSGTEGLVSEAARRAMLDTSIDAVIVADEAGAIVEFNHAAEAIFGHTREGVIGRPMTETIIPAHYIDRHRQGFMRHLATGENHIMRRLVEVEALRADGSVFPAELTVNEHRAGGRRLFSAFVRDISDRITSRRALERLAFTDMHTGLSNRTGLLRLCTGRPTRPSGAVVLMLRDLGVVKTSFGDDWAEPMIVETANLLSRMLPQEACLGRTGESEFTVVTWQPGAAAELAETLIGRLRSAIESGGRRFYLRVGLGVVERPGDATYLLRDAEMAARDCRDGHLLHFAEHMRAQHQQRLELEMALRDVIQRRTSALSLHYQPVVSARTGGLVGFEALVRWYSETHGPVSPALFVPLAEAGGFAERLGAWVIETAISACAGWNVRRRAHGLAPWHIAINLSATEVVAPDLIERVRQTMAFHGLPPQCVCFELTESAILNQPEIAIETLSRLRALGCTTAIDDFGTGYSSLSYLQRLPMDVLKIDRSFVLDMVDNSRSREIVRVMIEMAHGLGMSVVAEGVETTGALQILRQMGCDRAQGFLFGRAMPGDVAGTLPETLAPTG</sequence>
<keyword id="KW-1185">Reference proteome</keyword>
<dbReference type="EMBL" id="X63841">
    <property type="protein sequence ID" value="CAA45329.1"/>
    <property type="molecule type" value="Genomic_DNA"/>
</dbReference>
<dbReference type="EMBL" id="AP009384">
    <property type="protein sequence ID" value="BAF89083.1"/>
    <property type="molecule type" value="Genomic_DNA"/>
</dbReference>
<dbReference type="PIR" id="S18623">
    <property type="entry name" value="S18623"/>
</dbReference>
<dbReference type="RefSeq" id="WP_012171609.1">
    <property type="nucleotide sequence ID" value="NC_009937.1"/>
</dbReference>
<dbReference type="SMR" id="Q04855"/>
<dbReference type="STRING" id="438753.AZC_3085"/>
<dbReference type="KEGG" id="azc:AZC_3085"/>
<dbReference type="eggNOG" id="COG2199">
    <property type="taxonomic scope" value="Bacteria"/>
</dbReference>
<dbReference type="eggNOG" id="COG2200">
    <property type="taxonomic scope" value="Bacteria"/>
</dbReference>
<dbReference type="eggNOG" id="COG2203">
    <property type="taxonomic scope" value="Bacteria"/>
</dbReference>
<dbReference type="HOGENOM" id="CLU_000445_70_20_5"/>
<dbReference type="Proteomes" id="UP000000270">
    <property type="component" value="Chromosome"/>
</dbReference>
<dbReference type="GO" id="GO:0006355">
    <property type="term" value="P:regulation of DNA-templated transcription"/>
    <property type="evidence" value="ECO:0007669"/>
    <property type="project" value="InterPro"/>
</dbReference>
<dbReference type="CDD" id="cd01948">
    <property type="entry name" value="EAL"/>
    <property type="match status" value="1"/>
</dbReference>
<dbReference type="CDD" id="cd00130">
    <property type="entry name" value="PAS"/>
    <property type="match status" value="1"/>
</dbReference>
<dbReference type="Gene3D" id="3.30.450.40">
    <property type="match status" value="1"/>
</dbReference>
<dbReference type="Gene3D" id="3.30.70.270">
    <property type="match status" value="1"/>
</dbReference>
<dbReference type="Gene3D" id="3.20.20.450">
    <property type="entry name" value="EAL domain"/>
    <property type="match status" value="1"/>
</dbReference>
<dbReference type="Gene3D" id="3.30.450.20">
    <property type="entry name" value="PAS domain"/>
    <property type="match status" value="1"/>
</dbReference>
<dbReference type="InterPro" id="IPR052155">
    <property type="entry name" value="Biofilm_reg_signaling"/>
</dbReference>
<dbReference type="InterPro" id="IPR001633">
    <property type="entry name" value="EAL_dom"/>
</dbReference>
<dbReference type="InterPro" id="IPR035919">
    <property type="entry name" value="EAL_sf"/>
</dbReference>
<dbReference type="InterPro" id="IPR003018">
    <property type="entry name" value="GAF"/>
</dbReference>
<dbReference type="InterPro" id="IPR029016">
    <property type="entry name" value="GAF-like_dom_sf"/>
</dbReference>
<dbReference type="InterPro" id="IPR000160">
    <property type="entry name" value="GGDEF_dom"/>
</dbReference>
<dbReference type="InterPro" id="IPR029787">
    <property type="entry name" value="Nucleotide_cyclase"/>
</dbReference>
<dbReference type="InterPro" id="IPR001610">
    <property type="entry name" value="PAC"/>
</dbReference>
<dbReference type="InterPro" id="IPR000014">
    <property type="entry name" value="PAS"/>
</dbReference>
<dbReference type="InterPro" id="IPR000700">
    <property type="entry name" value="PAS-assoc_C"/>
</dbReference>
<dbReference type="InterPro" id="IPR035965">
    <property type="entry name" value="PAS-like_dom_sf"/>
</dbReference>
<dbReference type="InterPro" id="IPR013767">
    <property type="entry name" value="PAS_fold"/>
</dbReference>
<dbReference type="InterPro" id="IPR043128">
    <property type="entry name" value="Rev_trsase/Diguanyl_cyclase"/>
</dbReference>
<dbReference type="NCBIfam" id="TIGR00229">
    <property type="entry name" value="sensory_box"/>
    <property type="match status" value="1"/>
</dbReference>
<dbReference type="PANTHER" id="PTHR44757:SF2">
    <property type="entry name" value="BIOFILM ARCHITECTURE MAINTENANCE PROTEIN MBAA"/>
    <property type="match status" value="1"/>
</dbReference>
<dbReference type="PANTHER" id="PTHR44757">
    <property type="entry name" value="DIGUANYLATE CYCLASE DGCP"/>
    <property type="match status" value="1"/>
</dbReference>
<dbReference type="Pfam" id="PF00563">
    <property type="entry name" value="EAL"/>
    <property type="match status" value="1"/>
</dbReference>
<dbReference type="Pfam" id="PF01590">
    <property type="entry name" value="GAF"/>
    <property type="match status" value="1"/>
</dbReference>
<dbReference type="Pfam" id="PF00990">
    <property type="entry name" value="GGDEF"/>
    <property type="match status" value="1"/>
</dbReference>
<dbReference type="Pfam" id="PF00989">
    <property type="entry name" value="PAS"/>
    <property type="match status" value="1"/>
</dbReference>
<dbReference type="SMART" id="SM00052">
    <property type="entry name" value="EAL"/>
    <property type="match status" value="1"/>
</dbReference>
<dbReference type="SMART" id="SM00065">
    <property type="entry name" value="GAF"/>
    <property type="match status" value="1"/>
</dbReference>
<dbReference type="SMART" id="SM00267">
    <property type="entry name" value="GGDEF"/>
    <property type="match status" value="1"/>
</dbReference>
<dbReference type="SMART" id="SM00086">
    <property type="entry name" value="PAC"/>
    <property type="match status" value="1"/>
</dbReference>
<dbReference type="SMART" id="SM00091">
    <property type="entry name" value="PAS"/>
    <property type="match status" value="1"/>
</dbReference>
<dbReference type="SUPFAM" id="SSF141868">
    <property type="entry name" value="EAL domain-like"/>
    <property type="match status" value="1"/>
</dbReference>
<dbReference type="SUPFAM" id="SSF55781">
    <property type="entry name" value="GAF domain-like"/>
    <property type="match status" value="1"/>
</dbReference>
<dbReference type="SUPFAM" id="SSF55073">
    <property type="entry name" value="Nucleotide cyclase"/>
    <property type="match status" value="1"/>
</dbReference>
<dbReference type="SUPFAM" id="SSF55785">
    <property type="entry name" value="PYP-like sensor domain (PAS domain)"/>
    <property type="match status" value="1"/>
</dbReference>
<dbReference type="PROSITE" id="PS50883">
    <property type="entry name" value="EAL"/>
    <property type="match status" value="1"/>
</dbReference>
<dbReference type="PROSITE" id="PS50887">
    <property type="entry name" value="GGDEF"/>
    <property type="match status" value="1"/>
</dbReference>
<dbReference type="PROSITE" id="PS50113">
    <property type="entry name" value="PAC"/>
    <property type="match status" value="1"/>
</dbReference>
<dbReference type="PROSITE" id="PS50112">
    <property type="entry name" value="PAS"/>
    <property type="match status" value="1"/>
</dbReference>
<gene>
    <name type="ordered locus">AZC_3085</name>
</gene>
<accession>Q04855</accession>
<accession>A8IBK7</accession>
<evidence type="ECO:0000255" key="1">
    <source>
        <dbReference type="PROSITE-ProRule" id="PRU00074"/>
    </source>
</evidence>
<evidence type="ECO:0000255" key="2">
    <source>
        <dbReference type="PROSITE-ProRule" id="PRU00095"/>
    </source>
</evidence>
<evidence type="ECO:0000255" key="3">
    <source>
        <dbReference type="PROSITE-ProRule" id="PRU00140"/>
    </source>
</evidence>
<evidence type="ECO:0000255" key="4">
    <source>
        <dbReference type="PROSITE-ProRule" id="PRU00141"/>
    </source>
</evidence>
<organism>
    <name type="scientific">Azorhizobium caulinodans (strain ATCC 43989 / DSM 5975 / JCM 20966 / LMG 6465 / NBRC 14845 / NCIMB 13405 / ORS 571)</name>
    <dbReference type="NCBI Taxonomy" id="438753"/>
    <lineage>
        <taxon>Bacteria</taxon>
        <taxon>Pseudomonadati</taxon>
        <taxon>Pseudomonadota</taxon>
        <taxon>Alphaproteobacteria</taxon>
        <taxon>Hyphomicrobiales</taxon>
        <taxon>Xanthobacteraceae</taxon>
        <taxon>Azorhizobium</taxon>
    </lineage>
</organism>
<feature type="chain" id="PRO_0000066345" description="Uncharacterized protein AZC_3085">
    <location>
        <begin position="1"/>
        <end position="735"/>
    </location>
</feature>
<feature type="domain" description="GAF">
    <location>
        <begin position="25"/>
        <end position="175"/>
    </location>
</feature>
<feature type="domain" description="PAS" evidence="3">
    <location>
        <begin position="185"/>
        <end position="255"/>
    </location>
</feature>
<feature type="domain" description="PAC" evidence="4">
    <location>
        <begin position="263"/>
        <end position="313"/>
    </location>
</feature>
<feature type="domain" description="GGDEF" evidence="2">
    <location>
        <begin position="342"/>
        <end position="464"/>
    </location>
</feature>
<feature type="domain" description="EAL" evidence="1">
    <location>
        <begin position="472"/>
        <end position="732"/>
    </location>
</feature>
<proteinExistence type="predicted"/>
<name>Y3085_AZOC5</name>